<feature type="chain" id="PRO_0000125562" description="LSM complex subunit lsm3">
    <location>
        <begin position="1"/>
        <end position="93"/>
    </location>
</feature>
<feature type="domain" description="Sm" evidence="2">
    <location>
        <begin position="9"/>
        <end position="93"/>
    </location>
</feature>
<feature type="modified residue" description="Phosphoserine" evidence="3">
    <location>
        <position position="84"/>
    </location>
</feature>
<feature type="helix" evidence="15">
    <location>
        <begin position="11"/>
        <end position="15"/>
    </location>
</feature>
<feature type="turn" evidence="15">
    <location>
        <begin position="16"/>
        <end position="19"/>
    </location>
</feature>
<feature type="strand" evidence="15">
    <location>
        <begin position="20"/>
        <end position="26"/>
    </location>
</feature>
<feature type="turn" evidence="15">
    <location>
        <begin position="27"/>
        <end position="29"/>
    </location>
</feature>
<feature type="strand" evidence="15">
    <location>
        <begin position="30"/>
        <end position="39"/>
    </location>
</feature>
<feature type="strand" evidence="15">
    <location>
        <begin position="45"/>
        <end position="56"/>
    </location>
</feature>
<feature type="strand" evidence="15">
    <location>
        <begin position="69"/>
        <end position="80"/>
    </location>
</feature>
<feature type="helix" evidence="15">
    <location>
        <begin position="82"/>
        <end position="84"/>
    </location>
</feature>
<feature type="strand" evidence="15">
    <location>
        <begin position="85"/>
        <end position="89"/>
    </location>
</feature>
<protein>
    <recommendedName>
        <fullName evidence="7">LSM complex subunit lsm3</fullName>
    </recommendedName>
</protein>
<evidence type="ECO:0000250" key="1">
    <source>
        <dbReference type="UniProtKB" id="P57743"/>
    </source>
</evidence>
<evidence type="ECO:0000255" key="2">
    <source>
        <dbReference type="PROSITE-ProRule" id="PRU01346"/>
    </source>
</evidence>
<evidence type="ECO:0000269" key="3">
    <source>
    </source>
</evidence>
<evidence type="ECO:0000269" key="4">
    <source>
    </source>
</evidence>
<evidence type="ECO:0000269" key="5">
    <source>
    </source>
</evidence>
<evidence type="ECO:0000269" key="6">
    <source>
    </source>
</evidence>
<evidence type="ECO:0000305" key="7"/>
<evidence type="ECO:0000305" key="8">
    <source>
    </source>
</evidence>
<evidence type="ECO:0000305" key="9">
    <source>
    </source>
</evidence>
<evidence type="ECO:0007744" key="10">
    <source>
        <dbReference type="PDB" id="4EMG"/>
    </source>
</evidence>
<evidence type="ECO:0007744" key="11">
    <source>
        <dbReference type="PDB" id="6PPN"/>
    </source>
</evidence>
<evidence type="ECO:0007744" key="12">
    <source>
        <dbReference type="PDB" id="6PPP"/>
    </source>
</evidence>
<evidence type="ECO:0007744" key="13">
    <source>
        <dbReference type="PDB" id="6PPQ"/>
    </source>
</evidence>
<evidence type="ECO:0007744" key="14">
    <source>
        <dbReference type="PDB" id="6PPV"/>
    </source>
</evidence>
<evidence type="ECO:0007829" key="15">
    <source>
        <dbReference type="PDB" id="6PPQ"/>
    </source>
</evidence>
<sequence length="93" mass="10665">MESAQAVAEPLDLVRLSLDEIVYVKLRGDRELNGRLHAYDEHLNMVLGDAEEIVTIFDDEETDKDKALKTIRKHYEMLFVRGDSVILIAPPRN</sequence>
<dbReference type="EMBL" id="CU329671">
    <property type="protein sequence ID" value="CAB42366.2"/>
    <property type="molecule type" value="Genomic_DNA"/>
</dbReference>
<dbReference type="PIR" id="T40786">
    <property type="entry name" value="T40786"/>
</dbReference>
<dbReference type="RefSeq" id="NP_595747.1">
    <property type="nucleotide sequence ID" value="NM_001021647.2"/>
</dbReference>
<dbReference type="PDB" id="4EMG">
    <property type="method" value="X-ray"/>
    <property type="resolution" value="2.70 A"/>
    <property type="chains" value="A/B/C/D/E/F/G/H/I/J/K/L/M/N=1-93"/>
</dbReference>
<dbReference type="PDB" id="6PPN">
    <property type="method" value="X-ray"/>
    <property type="resolution" value="1.91 A"/>
    <property type="chains" value="C/K=1-93"/>
</dbReference>
<dbReference type="PDB" id="6PPP">
    <property type="method" value="X-ray"/>
    <property type="resolution" value="2.33 A"/>
    <property type="chains" value="C/K=1-93"/>
</dbReference>
<dbReference type="PDB" id="6PPQ">
    <property type="method" value="X-ray"/>
    <property type="resolution" value="1.81 A"/>
    <property type="chains" value="C=1-93"/>
</dbReference>
<dbReference type="PDB" id="6PPV">
    <property type="method" value="X-ray"/>
    <property type="resolution" value="2.05 A"/>
    <property type="chains" value="C=1-93"/>
</dbReference>
<dbReference type="PDBsum" id="4EMG"/>
<dbReference type="PDBsum" id="6PPN"/>
<dbReference type="PDBsum" id="6PPP"/>
<dbReference type="PDBsum" id="6PPQ"/>
<dbReference type="PDBsum" id="6PPV"/>
<dbReference type="SMR" id="Q9Y7M4"/>
<dbReference type="BioGRID" id="276745">
    <property type="interactions" value="8"/>
</dbReference>
<dbReference type="FunCoup" id="Q9Y7M4">
    <property type="interactions" value="357"/>
</dbReference>
<dbReference type="IntAct" id="Q9Y7M4">
    <property type="interactions" value="1"/>
</dbReference>
<dbReference type="STRING" id="284812.Q9Y7M4"/>
<dbReference type="iPTMnet" id="Q9Y7M4"/>
<dbReference type="PaxDb" id="4896-SPBC9B6.05c.1"/>
<dbReference type="EnsemblFungi" id="SPBC9B6.05c.1">
    <property type="protein sequence ID" value="SPBC9B6.05c.1:pep"/>
    <property type="gene ID" value="SPBC9B6.05c"/>
</dbReference>
<dbReference type="GeneID" id="2540212"/>
<dbReference type="KEGG" id="spo:2540212"/>
<dbReference type="PomBase" id="SPBC9B6.05c">
    <property type="gene designation" value="lsm3"/>
</dbReference>
<dbReference type="VEuPathDB" id="FungiDB:SPBC9B6.05c"/>
<dbReference type="eggNOG" id="KOG3460">
    <property type="taxonomic scope" value="Eukaryota"/>
</dbReference>
<dbReference type="HOGENOM" id="CLU_076902_5_1_1"/>
<dbReference type="InParanoid" id="Q9Y7M4"/>
<dbReference type="OMA" id="FDSHCNI"/>
<dbReference type="PhylomeDB" id="Q9Y7M4"/>
<dbReference type="Reactome" id="R-SPO-430039">
    <property type="pathway name" value="mRNA decay by 5' to 3' exoribonuclease"/>
</dbReference>
<dbReference type="EvolutionaryTrace" id="Q9Y7M4"/>
<dbReference type="PRO" id="PR:Q9Y7M4"/>
<dbReference type="Proteomes" id="UP000002485">
    <property type="component" value="Chromosome II"/>
</dbReference>
<dbReference type="GO" id="GO:0071013">
    <property type="term" value="C:catalytic step 2 spliceosome"/>
    <property type="evidence" value="ECO:0000318"/>
    <property type="project" value="GO_Central"/>
</dbReference>
<dbReference type="GO" id="GO:0140445">
    <property type="term" value="C:chromosome, telomeric repeat region"/>
    <property type="evidence" value="ECO:0000314"/>
    <property type="project" value="PomBase"/>
</dbReference>
<dbReference type="GO" id="GO:1990726">
    <property type="term" value="C:Lsm1-7-Pat1 complex"/>
    <property type="evidence" value="ECO:0000269"/>
    <property type="project" value="PomBase"/>
</dbReference>
<dbReference type="GO" id="GO:0120115">
    <property type="term" value="C:Lsm2-8 complex"/>
    <property type="evidence" value="ECO:0000269"/>
    <property type="project" value="PomBase"/>
</dbReference>
<dbReference type="GO" id="GO:0005730">
    <property type="term" value="C:nucleolus"/>
    <property type="evidence" value="ECO:0000250"/>
    <property type="project" value="PomBase"/>
</dbReference>
<dbReference type="GO" id="GO:0005634">
    <property type="term" value="C:nucleus"/>
    <property type="evidence" value="ECO:0007005"/>
    <property type="project" value="PomBase"/>
</dbReference>
<dbReference type="GO" id="GO:0000932">
    <property type="term" value="C:P-body"/>
    <property type="evidence" value="ECO:0000318"/>
    <property type="project" value="GO_Central"/>
</dbReference>
<dbReference type="GO" id="GO:0071011">
    <property type="term" value="C:precatalytic spliceosome"/>
    <property type="evidence" value="ECO:0000318"/>
    <property type="project" value="GO_Central"/>
</dbReference>
<dbReference type="GO" id="GO:0005697">
    <property type="term" value="C:telomerase holoenzyme complex"/>
    <property type="evidence" value="ECO:0000304"/>
    <property type="project" value="PomBase"/>
</dbReference>
<dbReference type="GO" id="GO:0005686">
    <property type="term" value="C:U2 snRNP"/>
    <property type="evidence" value="ECO:0000269"/>
    <property type="project" value="PomBase"/>
</dbReference>
<dbReference type="GO" id="GO:0046540">
    <property type="term" value="C:U4/U6 x U5 tri-snRNP complex"/>
    <property type="evidence" value="ECO:0000318"/>
    <property type="project" value="GO_Central"/>
</dbReference>
<dbReference type="GO" id="GO:0005682">
    <property type="term" value="C:U5 snRNP"/>
    <property type="evidence" value="ECO:0000314"/>
    <property type="project" value="PomBase"/>
</dbReference>
<dbReference type="GO" id="GO:0005688">
    <property type="term" value="C:U6 snRNP"/>
    <property type="evidence" value="ECO:0000269"/>
    <property type="project" value="PomBase"/>
</dbReference>
<dbReference type="GO" id="GO:0003682">
    <property type="term" value="F:chromatin binding"/>
    <property type="evidence" value="ECO:0000314"/>
    <property type="project" value="PomBase"/>
</dbReference>
<dbReference type="GO" id="GO:0003723">
    <property type="term" value="F:RNA binding"/>
    <property type="evidence" value="ECO:0000318"/>
    <property type="project" value="GO_Central"/>
</dbReference>
<dbReference type="GO" id="GO:0070034">
    <property type="term" value="F:telomerase RNA binding"/>
    <property type="evidence" value="ECO:0000314"/>
    <property type="project" value="PomBase"/>
</dbReference>
<dbReference type="GO" id="GO:0030620">
    <property type="term" value="F:U2 snRNA binding"/>
    <property type="evidence" value="ECO:0000314"/>
    <property type="project" value="PomBase"/>
</dbReference>
<dbReference type="GO" id="GO:0000398">
    <property type="term" value="P:mRNA splicing, via spliceosome"/>
    <property type="evidence" value="ECO:0000318"/>
    <property type="project" value="GO_Central"/>
</dbReference>
<dbReference type="GO" id="GO:0033962">
    <property type="term" value="P:P-body assembly"/>
    <property type="evidence" value="ECO:0000318"/>
    <property type="project" value="GO_Central"/>
</dbReference>
<dbReference type="GO" id="GO:0034337">
    <property type="term" value="P:RNA folding"/>
    <property type="evidence" value="ECO:0007669"/>
    <property type="project" value="GOC"/>
</dbReference>
<dbReference type="CDD" id="cd01730">
    <property type="entry name" value="LSm3"/>
    <property type="match status" value="1"/>
</dbReference>
<dbReference type="DisProt" id="DP02065"/>
<dbReference type="FunFam" id="2.30.30.100:FF:000036">
    <property type="entry name" value="U6 snRNA-associated Sm-like protein LSm3"/>
    <property type="match status" value="1"/>
</dbReference>
<dbReference type="Gene3D" id="2.30.30.100">
    <property type="match status" value="1"/>
</dbReference>
<dbReference type="InterPro" id="IPR034105">
    <property type="entry name" value="Lsm3"/>
</dbReference>
<dbReference type="InterPro" id="IPR010920">
    <property type="entry name" value="LSM_dom_sf"/>
</dbReference>
<dbReference type="InterPro" id="IPR047575">
    <property type="entry name" value="Sm"/>
</dbReference>
<dbReference type="InterPro" id="IPR040002">
    <property type="entry name" value="Sm-like_LSM3"/>
</dbReference>
<dbReference type="InterPro" id="IPR001163">
    <property type="entry name" value="Sm_dom_euk/arc"/>
</dbReference>
<dbReference type="PANTHER" id="PTHR13110">
    <property type="entry name" value="U6 SNRNA-ASSOCIATED SM-LIKE PROTEIN LSM3"/>
    <property type="match status" value="1"/>
</dbReference>
<dbReference type="Pfam" id="PF01423">
    <property type="entry name" value="LSM"/>
    <property type="match status" value="1"/>
</dbReference>
<dbReference type="SMART" id="SM00651">
    <property type="entry name" value="Sm"/>
    <property type="match status" value="1"/>
</dbReference>
<dbReference type="SUPFAM" id="SSF50182">
    <property type="entry name" value="Sm-like ribonucleoproteins"/>
    <property type="match status" value="1"/>
</dbReference>
<dbReference type="PROSITE" id="PS52002">
    <property type="entry name" value="SM"/>
    <property type="match status" value="1"/>
</dbReference>
<organism>
    <name type="scientific">Schizosaccharomyces pombe (strain 972 / ATCC 24843)</name>
    <name type="common">Fission yeast</name>
    <dbReference type="NCBI Taxonomy" id="284812"/>
    <lineage>
        <taxon>Eukaryota</taxon>
        <taxon>Fungi</taxon>
        <taxon>Dikarya</taxon>
        <taxon>Ascomycota</taxon>
        <taxon>Taphrinomycotina</taxon>
        <taxon>Schizosaccharomycetes</taxon>
        <taxon>Schizosaccharomycetales</taxon>
        <taxon>Schizosaccharomycetaceae</taxon>
        <taxon>Schizosaccharomyces</taxon>
    </lineage>
</organism>
<proteinExistence type="evidence at protein level"/>
<reference key="1">
    <citation type="journal article" date="2002" name="Nature">
        <title>The genome sequence of Schizosaccharomyces pombe.</title>
        <authorList>
            <person name="Wood V."/>
            <person name="Gwilliam R."/>
            <person name="Rajandream M.A."/>
            <person name="Lyne M.H."/>
            <person name="Lyne R."/>
            <person name="Stewart A."/>
            <person name="Sgouros J.G."/>
            <person name="Peat N."/>
            <person name="Hayles J."/>
            <person name="Baker S.G."/>
            <person name="Basham D."/>
            <person name="Bowman S."/>
            <person name="Brooks K."/>
            <person name="Brown D."/>
            <person name="Brown S."/>
            <person name="Chillingworth T."/>
            <person name="Churcher C.M."/>
            <person name="Collins M."/>
            <person name="Connor R."/>
            <person name="Cronin A."/>
            <person name="Davis P."/>
            <person name="Feltwell T."/>
            <person name="Fraser A."/>
            <person name="Gentles S."/>
            <person name="Goble A."/>
            <person name="Hamlin N."/>
            <person name="Harris D.E."/>
            <person name="Hidalgo J."/>
            <person name="Hodgson G."/>
            <person name="Holroyd S."/>
            <person name="Hornsby T."/>
            <person name="Howarth S."/>
            <person name="Huckle E.J."/>
            <person name="Hunt S."/>
            <person name="Jagels K."/>
            <person name="James K.D."/>
            <person name="Jones L."/>
            <person name="Jones M."/>
            <person name="Leather S."/>
            <person name="McDonald S."/>
            <person name="McLean J."/>
            <person name="Mooney P."/>
            <person name="Moule S."/>
            <person name="Mungall K.L."/>
            <person name="Murphy L.D."/>
            <person name="Niblett D."/>
            <person name="Odell C."/>
            <person name="Oliver K."/>
            <person name="O'Neil S."/>
            <person name="Pearson D."/>
            <person name="Quail M.A."/>
            <person name="Rabbinowitsch E."/>
            <person name="Rutherford K.M."/>
            <person name="Rutter S."/>
            <person name="Saunders D."/>
            <person name="Seeger K."/>
            <person name="Sharp S."/>
            <person name="Skelton J."/>
            <person name="Simmonds M.N."/>
            <person name="Squares R."/>
            <person name="Squares S."/>
            <person name="Stevens K."/>
            <person name="Taylor K."/>
            <person name="Taylor R.G."/>
            <person name="Tivey A."/>
            <person name="Walsh S.V."/>
            <person name="Warren T."/>
            <person name="Whitehead S."/>
            <person name="Woodward J.R."/>
            <person name="Volckaert G."/>
            <person name="Aert R."/>
            <person name="Robben J."/>
            <person name="Grymonprez B."/>
            <person name="Weltjens I."/>
            <person name="Vanstreels E."/>
            <person name="Rieger M."/>
            <person name="Schaefer M."/>
            <person name="Mueller-Auer S."/>
            <person name="Gabel C."/>
            <person name="Fuchs M."/>
            <person name="Duesterhoeft A."/>
            <person name="Fritzc C."/>
            <person name="Holzer E."/>
            <person name="Moestl D."/>
            <person name="Hilbert H."/>
            <person name="Borzym K."/>
            <person name="Langer I."/>
            <person name="Beck A."/>
            <person name="Lehrach H."/>
            <person name="Reinhardt R."/>
            <person name="Pohl T.M."/>
            <person name="Eger P."/>
            <person name="Zimmermann W."/>
            <person name="Wedler H."/>
            <person name="Wambutt R."/>
            <person name="Purnelle B."/>
            <person name="Goffeau A."/>
            <person name="Cadieu E."/>
            <person name="Dreano S."/>
            <person name="Gloux S."/>
            <person name="Lelaure V."/>
            <person name="Mottier S."/>
            <person name="Galibert F."/>
            <person name="Aves S.J."/>
            <person name="Xiang Z."/>
            <person name="Hunt C."/>
            <person name="Moore K."/>
            <person name="Hurst S.M."/>
            <person name="Lucas M."/>
            <person name="Rochet M."/>
            <person name="Gaillardin C."/>
            <person name="Tallada V.A."/>
            <person name="Garzon A."/>
            <person name="Thode G."/>
            <person name="Daga R.R."/>
            <person name="Cruzado L."/>
            <person name="Jimenez J."/>
            <person name="Sanchez M."/>
            <person name="del Rey F."/>
            <person name="Benito J."/>
            <person name="Dominguez A."/>
            <person name="Revuelta J.L."/>
            <person name="Moreno S."/>
            <person name="Armstrong J."/>
            <person name="Forsburg S.L."/>
            <person name="Cerutti L."/>
            <person name="Lowe T."/>
            <person name="McCombie W.R."/>
            <person name="Paulsen I."/>
            <person name="Potashkin J."/>
            <person name="Shpakovski G.V."/>
            <person name="Ussery D."/>
            <person name="Barrell B.G."/>
            <person name="Nurse P."/>
        </authorList>
    </citation>
    <scope>NUCLEOTIDE SEQUENCE [LARGE SCALE GENOMIC DNA]</scope>
    <source>
        <strain>972 / ATCC 24843</strain>
    </source>
</reference>
<reference key="2">
    <citation type="journal article" date="2008" name="J. Proteome Res.">
        <title>Phosphoproteome analysis of fission yeast.</title>
        <authorList>
            <person name="Wilson-Grady J.T."/>
            <person name="Villen J."/>
            <person name="Gygi S.P."/>
        </authorList>
    </citation>
    <scope>PHOSPHORYLATION [LARGE SCALE ANALYSIS] AT SER-84</scope>
    <scope>IDENTIFICATION BY MASS SPECTROMETRY</scope>
</reference>
<reference key="3">
    <citation type="journal article" date="2011" name="J. Mol. Biol.">
        <title>Structure of the LSm657 complex: an assembly intermediate of the LSm1-7 and LSm2-8 rings.</title>
        <authorList>
            <person name="Mund M."/>
            <person name="Neu A."/>
            <person name="Ullmann J."/>
            <person name="Neu U."/>
            <person name="Sprangers R."/>
        </authorList>
    </citation>
    <scope>SUBUNIT</scope>
    <scope>IDENTIFICATION IN THE LSM1-LSM7 AND LSM2-LSM8 COMPLEXES</scope>
</reference>
<reference evidence="10" key="4">
    <citation type="journal article" date="2012" name="PLoS ONE">
        <title>Crystal structures of Lsm3, Lsm4 and Lsm5/6/7 from Schizosaccharomyces pombe.</title>
        <authorList>
            <person name="Wu D."/>
            <person name="Jiang S."/>
            <person name="Bowler M.W."/>
            <person name="Song H."/>
        </authorList>
    </citation>
    <scope>X-RAY CRYSTALLOGRAPHY (2.70 ANGSTROMS)</scope>
    <scope>FUNCTION</scope>
    <scope>SUBUNIT</scope>
    <scope>IDENTIFICATION IN THE LSM1-LSM7 AND LSM2-LSM8 COMPLEXES</scope>
</reference>
<reference evidence="11 12 13 14" key="5">
    <citation type="journal article" date="2020" name="RNA">
        <title>Molecular basis for the distinct cellular functions of the Lsm1-7 and Lsm2-8 complexes.</title>
        <authorList>
            <person name="Montemayor E.J."/>
            <person name="Virta J.M."/>
            <person name="Hayes S.M."/>
            <person name="Nomura Y."/>
            <person name="Brow D.A."/>
            <person name="Butcher S.E."/>
        </authorList>
    </citation>
    <scope>X-RAY CRYSTALLOGRAPHY (1.81 ANGSTROMS) IN COMPLEX WITH RNA</scope>
    <scope>FUNCTION</scope>
    <scope>SUBUNIT</scope>
    <scope>IDENTIFICATION IN THE LSM1-LSM7 AND LSM2-LSM8 COMPLEXES</scope>
</reference>
<keyword id="KW-0002">3D-structure</keyword>
<keyword id="KW-0963">Cytoplasm</keyword>
<keyword id="KW-0507">mRNA processing</keyword>
<keyword id="KW-0508">mRNA splicing</keyword>
<keyword id="KW-0539">Nucleus</keyword>
<keyword id="KW-0597">Phosphoprotein</keyword>
<keyword id="KW-1185">Reference proteome</keyword>
<keyword id="KW-0687">Ribonucleoprotein</keyword>
<keyword id="KW-0694">RNA-binding</keyword>
<keyword id="KW-0747">Spliceosome</keyword>
<comment type="function">
    <text evidence="1 5 6">Component of LSm protein complexes, which are involved in RNA processing and may function in a chaperone-like manner (PubMed:22615807, PubMed:32518066). Component of the cytoplasmic LSM1-LSM7 complex which is involved in mRNA degradation by activating the decapping step (PubMed:32518066). The LSM1-LSM7 complex loads onto the 3'-end of single stranded RNA (PubMed:32518066). Component of the nuclear LSM2-LSM8 complex, which is involved in spliceosome assembly (PubMed:32518066). The LSM2-LSM8 complex plays a role in the biogenesis of the spliceosomal U4/U6-U5 tri-snRNP complex by accelerating prp24-mediated annealing of U4/U6 di-snRNA (By similarity). The LSM2-LSM8 complex binds U6 snRNA terminating with a cyclic 2',3' phosphate group; RNA with an unmodified 3' hydroxyl or non-cyclic 3' phosphate is bound less tightly (PubMed:32518066).</text>
</comment>
<comment type="subunit">
    <text evidence="4 5 6 8 9">Component of the heptameric LSM1-LSM7 complex that forms a seven-membered ring structure with a donut shape (PubMed:32518066). The LSm subunits are arranged in the order lsm1, lsm2, lsm3, lsm6, lsm5, lsm7 and lsm4 (PubMed:32518066). Component of the heptameric LSM2-LSM8 complex that forms a seven-membered ring structure with a donut shape (Probable) (PubMed:32518066). The LSm subunits are arranged in the order lsm8, lsm2, lsm3, lsm6, lsm5, lsm7 and lsm4 (PubMed:22001694, PubMed:22615807, PubMed:32518066).</text>
</comment>
<comment type="subcellular location">
    <subcellularLocation>
        <location evidence="1">Nucleus</location>
    </subcellularLocation>
    <subcellularLocation>
        <location evidence="1">Cytoplasm</location>
    </subcellularLocation>
</comment>
<comment type="similarity">
    <text evidence="7">Belongs to the snRNP Sm proteins family.</text>
</comment>
<gene>
    <name type="primary">lsm3</name>
    <name type="ORF">SPBC9B6.05c</name>
</gene>
<accession>Q9Y7M4</accession>
<name>LSM3_SCHPO</name>